<feature type="signal peptide" evidence="1">
    <location>
        <begin position="1"/>
        <end position="20"/>
    </location>
</feature>
<feature type="chain" id="PRO_0000423412" description="Systemic RNA interference defective protein 2" evidence="1">
    <location>
        <begin position="21"/>
        <end position="311"/>
    </location>
</feature>
<feature type="topological domain" description="Extracellular" evidence="1">
    <location>
        <begin position="21"/>
        <end position="188"/>
    </location>
</feature>
<feature type="transmembrane region" description="Helical" evidence="1">
    <location>
        <begin position="189"/>
        <end position="209"/>
    </location>
</feature>
<feature type="topological domain" description="Cytoplasmic" evidence="1">
    <location>
        <begin position="210"/>
        <end position="311"/>
    </location>
</feature>
<feature type="region of interest" description="Disordered" evidence="2">
    <location>
        <begin position="287"/>
        <end position="311"/>
    </location>
</feature>
<feature type="compositionally biased region" description="Polar residues" evidence="2">
    <location>
        <begin position="287"/>
        <end position="301"/>
    </location>
</feature>
<feature type="mutagenesis site" description="Reduced dsRNA uptake but complete rescue of gene silencing defect in sid-2 deletion mutant." evidence="5">
    <original>H</original>
    <variation>A</variation>
    <location>
        <position position="32"/>
    </location>
</feature>
<feature type="mutagenesis site" description="Reduced dsRNA uptake." evidence="5">
    <original>H</original>
    <variation>E</variation>
    <variation>R</variation>
    <location>
        <position position="32"/>
    </location>
</feature>
<feature type="mutagenesis site" description="In qt13; complete resistance to RNAi following soaking in dsRNA solution or ingestion of bacteria expressing dsRNA." evidence="4">
    <original>D</original>
    <variation>Q</variation>
    <location>
        <position position="34"/>
    </location>
</feature>
<feature type="mutagenesis site" description="In qt42; defective avoidance behavior in response to P.aeruginosa." evidence="6">
    <location>
        <begin position="163"/>
        <end position="311"/>
    </location>
</feature>
<feature type="mutagenesis site" description="No detectable dsRNA uptake and only partial rescue of gene silencing defect in sid-2 deletion mutant." evidence="5">
    <original>H</original>
    <variation>A</variation>
    <location>
        <position position="168"/>
    </location>
</feature>
<feature type="mutagenesis site" description="Reduced dsRNA uptake." evidence="5">
    <original>H</original>
    <variation>E</variation>
    <variation>R</variation>
    <location>
        <position position="168"/>
    </location>
</feature>
<feature type="mutagenesis site" description="Reduced dsRNA uptake but complete rescue of gene silencing defect in sid-2 deletion mutant." evidence="5">
    <original>H</original>
    <variation>A</variation>
    <location>
        <position position="175"/>
    </location>
</feature>
<feature type="mutagenesis site" description="Reduced dsRNA uptake." evidence="5">
    <original>H</original>
    <variation>E</variation>
    <variation>R</variation>
    <location>
        <position position="175"/>
    </location>
</feature>
<feature type="mutagenesis site" description="In qt20; complete resistance to RNAi following soaking in dsRNA solution or ingestion of bacteria expressing dsRNA." evidence="4">
    <original>G</original>
    <variation>D</variation>
    <location>
        <position position="199"/>
    </location>
</feature>
<name>SID2_CAEEL</name>
<dbReference type="EMBL" id="AY466439">
    <property type="protein sequence ID" value="AAS45709.1"/>
    <property type="molecule type" value="mRNA"/>
</dbReference>
<dbReference type="EMBL" id="BX284603">
    <property type="protein sequence ID" value="CAB07300.4"/>
    <property type="molecule type" value="Genomic_DNA"/>
</dbReference>
<dbReference type="PIR" id="A88618">
    <property type="entry name" value="A88618"/>
</dbReference>
<dbReference type="PIR" id="T27883">
    <property type="entry name" value="T27883"/>
</dbReference>
<dbReference type="RefSeq" id="NP_499823.2">
    <property type="nucleotide sequence ID" value="NM_067422.7"/>
</dbReference>
<dbReference type="SMR" id="G5EEV9"/>
<dbReference type="FunCoup" id="G5EEV9">
    <property type="interactions" value="1545"/>
</dbReference>
<dbReference type="STRING" id="6239.ZK520.2.1"/>
<dbReference type="PaxDb" id="6239-ZK520.2"/>
<dbReference type="PeptideAtlas" id="G5EEV9"/>
<dbReference type="EnsemblMetazoa" id="ZK520.2.1">
    <property type="protein sequence ID" value="ZK520.2.1"/>
    <property type="gene ID" value="WBGene00004796"/>
</dbReference>
<dbReference type="GeneID" id="176805"/>
<dbReference type="KEGG" id="cel:CELE_ZK520.2"/>
<dbReference type="AGR" id="WB:WBGene00004796"/>
<dbReference type="CTD" id="176805"/>
<dbReference type="WormBase" id="ZK520.2">
    <property type="protein sequence ID" value="CE33908"/>
    <property type="gene ID" value="WBGene00004796"/>
    <property type="gene designation" value="sid-2"/>
</dbReference>
<dbReference type="eggNOG" id="ENOG502TFYD">
    <property type="taxonomic scope" value="Eukaryota"/>
</dbReference>
<dbReference type="HOGENOM" id="CLU_967174_0_0_1"/>
<dbReference type="InParanoid" id="G5EEV9"/>
<dbReference type="OrthoDB" id="5872727at2759"/>
<dbReference type="PRO" id="PR:G5EEV9"/>
<dbReference type="Proteomes" id="UP000001940">
    <property type="component" value="Chromosome III"/>
</dbReference>
<dbReference type="Bgee" id="WBGene00004796">
    <property type="expression patterns" value="Expressed in larva and 3 other cell types or tissues"/>
</dbReference>
<dbReference type="GO" id="GO:0016324">
    <property type="term" value="C:apical plasma membrane"/>
    <property type="evidence" value="ECO:0000314"/>
    <property type="project" value="WormBase"/>
</dbReference>
<dbReference type="GO" id="GO:0005737">
    <property type="term" value="C:cytoplasm"/>
    <property type="evidence" value="ECO:0000314"/>
    <property type="project" value="UniProtKB"/>
</dbReference>
<dbReference type="GO" id="GO:0005886">
    <property type="term" value="C:plasma membrane"/>
    <property type="evidence" value="ECO:0000314"/>
    <property type="project" value="UniProtKB"/>
</dbReference>
<dbReference type="GO" id="GO:0006897">
    <property type="term" value="P:endocytosis"/>
    <property type="evidence" value="ECO:0007669"/>
    <property type="project" value="UniProtKB-KW"/>
</dbReference>
<dbReference type="GO" id="GO:0035194">
    <property type="term" value="P:regulatory ncRNA-mediated post-transcriptional gene silencing"/>
    <property type="evidence" value="ECO:0000315"/>
    <property type="project" value="WormBase"/>
</dbReference>
<dbReference type="GO" id="GO:0050658">
    <property type="term" value="P:RNA transport"/>
    <property type="evidence" value="ECO:0000314"/>
    <property type="project" value="UniProtKB"/>
</dbReference>
<evidence type="ECO:0000255" key="1"/>
<evidence type="ECO:0000256" key="2">
    <source>
        <dbReference type="SAM" id="MobiDB-lite"/>
    </source>
</evidence>
<evidence type="ECO:0000269" key="3">
    <source>
    </source>
</evidence>
<evidence type="ECO:0000269" key="4">
    <source>
    </source>
</evidence>
<evidence type="ECO:0000269" key="5">
    <source>
    </source>
</evidence>
<evidence type="ECO:0000269" key="6">
    <source>
    </source>
</evidence>
<evidence type="ECO:0000303" key="7">
    <source>
    </source>
</evidence>
<evidence type="ECO:0000305" key="8"/>
<evidence type="ECO:0000312" key="9">
    <source>
        <dbReference type="EMBL" id="AAS45709.1"/>
    </source>
</evidence>
<evidence type="ECO:0000312" key="10">
    <source>
        <dbReference type="EMBL" id="CAB07300.4"/>
    </source>
</evidence>
<evidence type="ECO:0000312" key="11">
    <source>
        <dbReference type="WormBase" id="ZK520.2"/>
    </source>
</evidence>
<gene>
    <name evidence="11" type="primary">sid-2</name>
    <name evidence="11" type="ORF">ZK520.2</name>
</gene>
<accession>G5EEV9</accession>
<reference evidence="8 9" key="1">
    <citation type="journal article" date="2007" name="Proc. Natl. Acad. Sci. U.S.A.">
        <title>Caenorhabditis elegans SID-2 is required for environmental RNA interference.</title>
        <authorList>
            <person name="Winston W.M."/>
            <person name="Sutherlin M."/>
            <person name="Wright A.J."/>
            <person name="Feinberg E.H."/>
            <person name="Hunter C.P."/>
        </authorList>
    </citation>
    <scope>NUCLEOTIDE SEQUENCE [MRNA]</scope>
    <scope>FUNCTION</scope>
    <scope>SUBCELLULAR LOCATION</scope>
    <scope>TISSUE SPECIFICITY</scope>
    <scope>MUTAGENESIS OF ASP-34 AND GLY-199</scope>
</reference>
<reference evidence="10" key="2">
    <citation type="journal article" date="1998" name="Science">
        <title>Genome sequence of the nematode C. elegans: a platform for investigating biology.</title>
        <authorList>
            <consortium name="The C. elegans sequencing consortium"/>
        </authorList>
    </citation>
    <scope>NUCLEOTIDE SEQUENCE [LARGE SCALE GENOMIC DNA]</scope>
    <source>
        <strain evidence="10">Bristol N2</strain>
    </source>
</reference>
<reference evidence="8" key="3">
    <citation type="journal article" date="2006" name="Cold Spring Harb. Symp. Quant. Biol.">
        <title>Systemic RNAi in Caenorhabditis elegans.</title>
        <authorList>
            <person name="Hunter C.P."/>
            <person name="Winston W.M."/>
            <person name="Molodowitch C."/>
            <person name="Feinberg E.H."/>
            <person name="Shih J."/>
            <person name="Sutherlin M."/>
            <person name="Wright A.J."/>
            <person name="Fitzgerald M.C."/>
        </authorList>
    </citation>
    <scope>FUNCTION</scope>
    <scope>SUBCELLULAR LOCATION</scope>
    <scope>TISSUE SPECIFICITY</scope>
</reference>
<reference evidence="8" key="4">
    <citation type="journal article" date="2012" name="Mol. Cell">
        <title>Uptake of extracellular double-stranded RNA by SID-2.</title>
        <authorList>
            <person name="McEwan D.L."/>
            <person name="Weisman A.S."/>
            <person name="Hunter C.P."/>
        </authorList>
    </citation>
    <scope>FUNCTION</scope>
    <scope>SUBCELLULAR LOCATION</scope>
    <scope>TISSUE SPECIFICITY</scope>
    <scope>MUTAGENESIS OF HIS-32; HIS-168 AND HIS-175</scope>
</reference>
<reference key="5">
    <citation type="journal article" date="2020" name="Nature">
        <title>C. elegans interprets bacterial non-coding RNAs to learn pathogenic avoidance.</title>
        <authorList>
            <person name="Kaletsky R."/>
            <person name="Moore R.S."/>
            <person name="Vrla G.D."/>
            <person name="Parsons L.R."/>
            <person name="Gitai Z."/>
            <person name="Murphy C.T."/>
        </authorList>
    </citation>
    <scope>FUNCTION</scope>
    <scope>MUTAGENESIS OF 163-GLN--TRP-311</scope>
</reference>
<proteinExistence type="evidence at protein level"/>
<sequence>MPRFVYFCFALIALLPISWTMDGILITDVEIHVDVCQISCKASNTASLLINDAPFTPMCNSAGDQIFFTYNGTAAISDLKNVTFILEVTTDTKNCTFTANYTGYFTPDPKSKPFQLGFASATLNRDMGKVTKTIMEDSGEMVEQDFSNSSAVPTPASTTPLPQSTVAHLTIAYVHLQYEETKTVVNKNGGAVAVAVIEGIALIAILAFLGYRTMVNHKLQNSTRTNGLYGYDNNNSSRITVPDAMRMSDIPPPRDPMYASPPTPLSQPTPARNTVMTTQELVVPTANSSAAQPSTTSNGQFNDPFATLESW</sequence>
<protein>
    <recommendedName>
        <fullName evidence="7">Systemic RNA interference defective protein 2</fullName>
    </recommendedName>
</protein>
<organism>
    <name type="scientific">Caenorhabditis elegans</name>
    <dbReference type="NCBI Taxonomy" id="6239"/>
    <lineage>
        <taxon>Eukaryota</taxon>
        <taxon>Metazoa</taxon>
        <taxon>Ecdysozoa</taxon>
        <taxon>Nematoda</taxon>
        <taxon>Chromadorea</taxon>
        <taxon>Rhabditida</taxon>
        <taxon>Rhabditina</taxon>
        <taxon>Rhabditomorpha</taxon>
        <taxon>Rhabditoidea</taxon>
        <taxon>Rhabditidae</taxon>
        <taxon>Peloderinae</taxon>
        <taxon>Caenorhabditis</taxon>
    </lineage>
</organism>
<keyword id="KW-1003">Cell membrane</keyword>
<keyword id="KW-0963">Cytoplasm</keyword>
<keyword id="KW-0254">Endocytosis</keyword>
<keyword id="KW-0472">Membrane</keyword>
<keyword id="KW-1185">Reference proteome</keyword>
<keyword id="KW-0943">RNA-mediated gene silencing</keyword>
<keyword id="KW-0732">Signal</keyword>
<keyword id="KW-0812">Transmembrane</keyword>
<keyword id="KW-1133">Transmembrane helix</keyword>
<keyword id="KW-0813">Transport</keyword>
<comment type="function">
    <text evidence="3 4 5 6">Plays a role in RNA-mediated gene silencing by mediating endocytic uptake of double-stranded RNA (dsRNA) ingested from the environment into intestinal cells from the intestinal lumen. Selective for dsRNAs of at least 50 bp. Required for avoidance behavior induced by small RNAs derived from pathogenic bacteria such as P.aeruginosa (PubMed:32908307).</text>
</comment>
<comment type="subcellular location">
    <subcellularLocation>
        <location evidence="3 4 5">Apical cell membrane</location>
        <topology evidence="3 4 5">Single-pass type I membrane protein</topology>
    </subcellularLocation>
    <subcellularLocation>
        <location evidence="3 4 5">Cytoplasm</location>
    </subcellularLocation>
    <text evidence="3 4 5">Localizes to the apical membrane of intestinal cells and also to punctate cytoplasmic structures.</text>
</comment>
<comment type="tissue specificity">
    <text evidence="3 4 5">Expressed in the intestinal lumen. Also present, at lower levels, in the excretory duct cells.</text>
</comment>
<comment type="domain">
    <text evidence="5">The extracellular domain is necessary for the uptake of dsRNA.</text>
</comment>
<comment type="miscellaneous">
    <text evidence="6">The avoidance behavior is transgenerationally inherited, and thus progeny display this same aversion despite never having been exposed to this pathogenic bacteria.</text>
</comment>